<sequence length="261" mass="28082">MSESLHLTRNGPILEITLDRPKANAIDAKTSFAMGEAFLNFRDDPELRVAIITGGGEKFFSAGWDLKAAAEGEAPDADFGSGGFAGLTEIFDLDKPVIAAVNGYAFGGGFELALAADFIVCAENASFALPEAKLGIVPDSGGVLRLPKLLPPAIVNEMVMTGRRMSAEEALRWGVVNRVVSQSELMDSARELAQQLVNSAPLAIAALKEIYRATSEMPVEEGYRYIRSGVLKHYPSVLHSEDALEGPQAFAEKRDPVWKGR</sequence>
<organism>
    <name type="scientific">Salmonella enteritidis PT4 (strain P125109)</name>
    <dbReference type="NCBI Taxonomy" id="550537"/>
    <lineage>
        <taxon>Bacteria</taxon>
        <taxon>Pseudomonadati</taxon>
        <taxon>Pseudomonadota</taxon>
        <taxon>Gammaproteobacteria</taxon>
        <taxon>Enterobacterales</taxon>
        <taxon>Enterobacteriaceae</taxon>
        <taxon>Salmonella</taxon>
    </lineage>
</organism>
<reference key="1">
    <citation type="journal article" date="2008" name="Genome Res.">
        <title>Comparative genome analysis of Salmonella enteritidis PT4 and Salmonella gallinarum 287/91 provides insights into evolutionary and host adaptation pathways.</title>
        <authorList>
            <person name="Thomson N.R."/>
            <person name="Clayton D.J."/>
            <person name="Windhorst D."/>
            <person name="Vernikos G."/>
            <person name="Davidson S."/>
            <person name="Churcher C."/>
            <person name="Quail M.A."/>
            <person name="Stevens M."/>
            <person name="Jones M.A."/>
            <person name="Watson M."/>
            <person name="Barron A."/>
            <person name="Layton A."/>
            <person name="Pickard D."/>
            <person name="Kingsley R.A."/>
            <person name="Bignell A."/>
            <person name="Clark L."/>
            <person name="Harris B."/>
            <person name="Ormond D."/>
            <person name="Abdellah Z."/>
            <person name="Brooks K."/>
            <person name="Cherevach I."/>
            <person name="Chillingworth T."/>
            <person name="Woodward J."/>
            <person name="Norberczak H."/>
            <person name="Lord A."/>
            <person name="Arrowsmith C."/>
            <person name="Jagels K."/>
            <person name="Moule S."/>
            <person name="Mungall K."/>
            <person name="Saunders M."/>
            <person name="Whitehead S."/>
            <person name="Chabalgoity J.A."/>
            <person name="Maskell D."/>
            <person name="Humphreys T."/>
            <person name="Roberts M."/>
            <person name="Barrow P.A."/>
            <person name="Dougan G."/>
            <person name="Parkhill J."/>
        </authorList>
    </citation>
    <scope>NUCLEOTIDE SEQUENCE [LARGE SCALE GENOMIC DNA]</scope>
    <source>
        <strain>P125109</strain>
    </source>
</reference>
<protein>
    <recommendedName>
        <fullName evidence="1">Carnitinyl-CoA dehydratase</fullName>
        <ecNumber evidence="1">4.2.1.149</ecNumber>
    </recommendedName>
    <alternativeName>
        <fullName evidence="1">Crotonobetainyl-CoA hydratase</fullName>
    </alternativeName>
</protein>
<accession>B5R1Q9</accession>
<dbReference type="EC" id="4.2.1.149" evidence="1"/>
<dbReference type="EMBL" id="AM933172">
    <property type="protein sequence ID" value="CAR31660.1"/>
    <property type="molecule type" value="Genomic_DNA"/>
</dbReference>
<dbReference type="RefSeq" id="WP_000004387.1">
    <property type="nucleotide sequence ID" value="NC_011294.1"/>
</dbReference>
<dbReference type="SMR" id="B5R1Q9"/>
<dbReference type="KEGG" id="set:SEN0071"/>
<dbReference type="HOGENOM" id="CLU_009834_7_6_6"/>
<dbReference type="UniPathway" id="UPA00117"/>
<dbReference type="Proteomes" id="UP000000613">
    <property type="component" value="Chromosome"/>
</dbReference>
<dbReference type="GO" id="GO:0016836">
    <property type="term" value="F:hydro-lyase activity"/>
    <property type="evidence" value="ECO:0007669"/>
    <property type="project" value="UniProtKB-UniRule"/>
</dbReference>
<dbReference type="GO" id="GO:0008735">
    <property type="term" value="F:L-carnitine CoA-transferase activity"/>
    <property type="evidence" value="ECO:0007669"/>
    <property type="project" value="RHEA"/>
</dbReference>
<dbReference type="GO" id="GO:0009437">
    <property type="term" value="P:carnitine metabolic process"/>
    <property type="evidence" value="ECO:0007669"/>
    <property type="project" value="UniProtKB-UniRule"/>
</dbReference>
<dbReference type="GO" id="GO:0006635">
    <property type="term" value="P:fatty acid beta-oxidation"/>
    <property type="evidence" value="ECO:0007669"/>
    <property type="project" value="TreeGrafter"/>
</dbReference>
<dbReference type="CDD" id="cd06558">
    <property type="entry name" value="crotonase-like"/>
    <property type="match status" value="1"/>
</dbReference>
<dbReference type="FunFam" id="1.10.12.10:FF:000005">
    <property type="entry name" value="Carnitinyl-CoA dehydratase"/>
    <property type="match status" value="1"/>
</dbReference>
<dbReference type="FunFam" id="3.90.226.10:FF:000009">
    <property type="entry name" value="Carnitinyl-CoA dehydratase"/>
    <property type="match status" value="1"/>
</dbReference>
<dbReference type="Gene3D" id="3.90.226.10">
    <property type="entry name" value="2-enoyl-CoA Hydratase, Chain A, domain 1"/>
    <property type="match status" value="1"/>
</dbReference>
<dbReference type="Gene3D" id="1.10.12.10">
    <property type="entry name" value="Lyase 2-enoyl-coa Hydratase, Chain A, domain 2"/>
    <property type="match status" value="1"/>
</dbReference>
<dbReference type="HAMAP" id="MF_01051">
    <property type="entry name" value="CaiD"/>
    <property type="match status" value="1"/>
</dbReference>
<dbReference type="InterPro" id="IPR022852">
    <property type="entry name" value="Carnitinyl_CoA_dehydratase"/>
</dbReference>
<dbReference type="InterPro" id="IPR029045">
    <property type="entry name" value="ClpP/crotonase-like_dom_sf"/>
</dbReference>
<dbReference type="InterPro" id="IPR018376">
    <property type="entry name" value="Enoyl-CoA_hyd/isom_CS"/>
</dbReference>
<dbReference type="InterPro" id="IPR001753">
    <property type="entry name" value="Enoyl-CoA_hydra/iso"/>
</dbReference>
<dbReference type="InterPro" id="IPR014748">
    <property type="entry name" value="Enoyl-CoA_hydra_C"/>
</dbReference>
<dbReference type="NCBIfam" id="NF002936">
    <property type="entry name" value="PRK03580.1"/>
    <property type="match status" value="1"/>
</dbReference>
<dbReference type="PANTHER" id="PTHR11941:SF54">
    <property type="entry name" value="ENOYL-COA HYDRATASE, MITOCHONDRIAL"/>
    <property type="match status" value="1"/>
</dbReference>
<dbReference type="PANTHER" id="PTHR11941">
    <property type="entry name" value="ENOYL-COA HYDRATASE-RELATED"/>
    <property type="match status" value="1"/>
</dbReference>
<dbReference type="Pfam" id="PF00378">
    <property type="entry name" value="ECH_1"/>
    <property type="match status" value="1"/>
</dbReference>
<dbReference type="SUPFAM" id="SSF52096">
    <property type="entry name" value="ClpP/crotonase"/>
    <property type="match status" value="1"/>
</dbReference>
<dbReference type="PROSITE" id="PS00166">
    <property type="entry name" value="ENOYL_COA_HYDRATASE"/>
    <property type="match status" value="1"/>
</dbReference>
<gene>
    <name evidence="1" type="primary">caiD</name>
    <name type="ordered locus">SEN0071</name>
</gene>
<name>CAID_SALEP</name>
<comment type="function">
    <text evidence="1">Catalyzes the reversible dehydration of L-carnitinyl-CoA to crotonobetainyl-CoA.</text>
</comment>
<comment type="catalytic activity">
    <reaction evidence="1">
        <text>(R)-carnitinyl-CoA = crotonobetainyl-CoA + H2O</text>
        <dbReference type="Rhea" id="RHEA:28338"/>
        <dbReference type="ChEBI" id="CHEBI:15377"/>
        <dbReference type="ChEBI" id="CHEBI:60932"/>
        <dbReference type="ChEBI" id="CHEBI:60933"/>
        <dbReference type="EC" id="4.2.1.149"/>
    </reaction>
</comment>
<comment type="pathway">
    <text evidence="1">Amine and polyamine metabolism; carnitine metabolism.</text>
</comment>
<comment type="similarity">
    <text evidence="1">Belongs to the enoyl-CoA hydratase/isomerase family.</text>
</comment>
<feature type="chain" id="PRO_1000136262" description="Carnitinyl-CoA dehydratase">
    <location>
        <begin position="1"/>
        <end position="261"/>
    </location>
</feature>
<feature type="active site" description="Nucleophile" evidence="1">
    <location>
        <position position="111"/>
    </location>
</feature>
<feature type="active site" description="Proton acceptor" evidence="1">
    <location>
        <position position="131"/>
    </location>
</feature>
<evidence type="ECO:0000255" key="1">
    <source>
        <dbReference type="HAMAP-Rule" id="MF_01051"/>
    </source>
</evidence>
<keyword id="KW-0456">Lyase</keyword>
<proteinExistence type="inferred from homology"/>